<dbReference type="EC" id="1.7.1.7" evidence="1"/>
<dbReference type="EMBL" id="FM211187">
    <property type="protein sequence ID" value="CAR68953.1"/>
    <property type="molecule type" value="Genomic_DNA"/>
</dbReference>
<dbReference type="RefSeq" id="WP_000931178.1">
    <property type="nucleotide sequence ID" value="NC_011900.1"/>
</dbReference>
<dbReference type="SMR" id="B8ZJR9"/>
<dbReference type="KEGG" id="sne:SPN23F11440"/>
<dbReference type="HOGENOM" id="CLU_022552_5_0_9"/>
<dbReference type="GO" id="GO:0005829">
    <property type="term" value="C:cytosol"/>
    <property type="evidence" value="ECO:0007669"/>
    <property type="project" value="TreeGrafter"/>
</dbReference>
<dbReference type="GO" id="GO:1902560">
    <property type="term" value="C:GMP reductase complex"/>
    <property type="evidence" value="ECO:0007669"/>
    <property type="project" value="InterPro"/>
</dbReference>
<dbReference type="GO" id="GO:0003920">
    <property type="term" value="F:GMP reductase activity"/>
    <property type="evidence" value="ECO:0007669"/>
    <property type="project" value="UniProtKB-UniRule"/>
</dbReference>
<dbReference type="GO" id="GO:0006163">
    <property type="term" value="P:purine nucleotide metabolic process"/>
    <property type="evidence" value="ECO:0007669"/>
    <property type="project" value="UniProtKB-UniRule"/>
</dbReference>
<dbReference type="CDD" id="cd00381">
    <property type="entry name" value="IMPDH"/>
    <property type="match status" value="1"/>
</dbReference>
<dbReference type="FunFam" id="3.20.20.70:FF:000079">
    <property type="entry name" value="GMP reductase"/>
    <property type="match status" value="1"/>
</dbReference>
<dbReference type="Gene3D" id="3.20.20.70">
    <property type="entry name" value="Aldolase class I"/>
    <property type="match status" value="1"/>
</dbReference>
<dbReference type="HAMAP" id="MF_01511">
    <property type="entry name" value="GMP_reduct_type2"/>
    <property type="match status" value="1"/>
</dbReference>
<dbReference type="InterPro" id="IPR013785">
    <property type="entry name" value="Aldolase_TIM"/>
</dbReference>
<dbReference type="InterPro" id="IPR050139">
    <property type="entry name" value="GMP_reductase"/>
</dbReference>
<dbReference type="InterPro" id="IPR005994">
    <property type="entry name" value="GuaC_type_2"/>
</dbReference>
<dbReference type="InterPro" id="IPR015875">
    <property type="entry name" value="IMP_DH/GMP_Rdtase_CS"/>
</dbReference>
<dbReference type="InterPro" id="IPR001093">
    <property type="entry name" value="IMP_DH_GMPRt"/>
</dbReference>
<dbReference type="NCBIfam" id="TIGR01306">
    <property type="entry name" value="GMP_reduct_2"/>
    <property type="match status" value="1"/>
</dbReference>
<dbReference type="NCBIfam" id="NF003966">
    <property type="entry name" value="PRK05458.1"/>
    <property type="match status" value="1"/>
</dbReference>
<dbReference type="PANTHER" id="PTHR43170">
    <property type="entry name" value="GMP REDUCTASE"/>
    <property type="match status" value="1"/>
</dbReference>
<dbReference type="PANTHER" id="PTHR43170:SF5">
    <property type="entry name" value="GMP REDUCTASE"/>
    <property type="match status" value="1"/>
</dbReference>
<dbReference type="Pfam" id="PF00478">
    <property type="entry name" value="IMPDH"/>
    <property type="match status" value="1"/>
</dbReference>
<dbReference type="PIRSF" id="PIRSF036500">
    <property type="entry name" value="GMP_red_Firmic"/>
    <property type="match status" value="1"/>
</dbReference>
<dbReference type="SMART" id="SM01240">
    <property type="entry name" value="IMPDH"/>
    <property type="match status" value="1"/>
</dbReference>
<dbReference type="SUPFAM" id="SSF51412">
    <property type="entry name" value="Inosine monophosphate dehydrogenase (IMPDH)"/>
    <property type="match status" value="1"/>
</dbReference>
<dbReference type="PROSITE" id="PS00487">
    <property type="entry name" value="IMP_DH_GMP_RED"/>
    <property type="match status" value="1"/>
</dbReference>
<evidence type="ECO:0000255" key="1">
    <source>
        <dbReference type="HAMAP-Rule" id="MF_01511"/>
    </source>
</evidence>
<organism>
    <name type="scientific">Streptococcus pneumoniae (strain ATCC 700669 / Spain 23F-1)</name>
    <dbReference type="NCBI Taxonomy" id="561276"/>
    <lineage>
        <taxon>Bacteria</taxon>
        <taxon>Bacillati</taxon>
        <taxon>Bacillota</taxon>
        <taxon>Bacilli</taxon>
        <taxon>Lactobacillales</taxon>
        <taxon>Streptococcaceae</taxon>
        <taxon>Streptococcus</taxon>
    </lineage>
</organism>
<proteinExistence type="inferred from homology"/>
<feature type="chain" id="PRO_1000185057" description="GMP reductase">
    <location>
        <begin position="1"/>
        <end position="328"/>
    </location>
</feature>
<feature type="active site" description="Thioimidate intermediate" evidence="1">
    <location>
        <position position="176"/>
    </location>
</feature>
<feature type="binding site" evidence="1">
    <location>
        <begin position="205"/>
        <end position="228"/>
    </location>
    <ligand>
        <name>NADP(+)</name>
        <dbReference type="ChEBI" id="CHEBI:58349"/>
    </ligand>
</feature>
<protein>
    <recommendedName>
        <fullName evidence="1">GMP reductase</fullName>
        <ecNumber evidence="1">1.7.1.7</ecNumber>
    </recommendedName>
    <alternativeName>
        <fullName evidence="1">Guanosine 5'-monophosphate oxidoreductase</fullName>
        <shortName evidence="1">Guanosine monophosphate reductase</shortName>
    </alternativeName>
</protein>
<sequence>MLNEFPIFDYEDIQLIPNKCVIKSRAEADTSVTLGNHTFKLPVVPANMQTILDENVAEQLAKGGYFYIMHRFDEAGRIPFIKRMHNQGLIASISVGVKDYEYDFVRQLKTDAPEYITIDIAHGHADSVISMIQHIKKELPDTFVIAGNVGTPEAVRELENAGADATKVGIGPGKVCITKVKTGFGTGGWQLAALRWCAKAARKPIIADGGIRTHGDIAKSIRFGASMIMIGSLFAGHIESPGKTIEVDGEQFKEYYGSASQYQKGAYKNVEGKRILLPAKGHLQDTLTEMEQDLQSAISYAGGRQVADLKHVDYVIVKNSIWNGDASH</sequence>
<keyword id="KW-0521">NADP</keyword>
<keyword id="KW-0560">Oxidoreductase</keyword>
<comment type="function">
    <text evidence="1">Catalyzes the irreversible NADPH-dependent deamination of GMP to IMP. It functions in the conversion of nucleobase, nucleoside and nucleotide derivatives of G to A nucleotides, and in maintaining the intracellular balance of A and G nucleotides.</text>
</comment>
<comment type="catalytic activity">
    <reaction evidence="1">
        <text>IMP + NH4(+) + NADP(+) = GMP + NADPH + 2 H(+)</text>
        <dbReference type="Rhea" id="RHEA:17185"/>
        <dbReference type="ChEBI" id="CHEBI:15378"/>
        <dbReference type="ChEBI" id="CHEBI:28938"/>
        <dbReference type="ChEBI" id="CHEBI:57783"/>
        <dbReference type="ChEBI" id="CHEBI:58053"/>
        <dbReference type="ChEBI" id="CHEBI:58115"/>
        <dbReference type="ChEBI" id="CHEBI:58349"/>
        <dbReference type="EC" id="1.7.1.7"/>
    </reaction>
</comment>
<comment type="similarity">
    <text evidence="1">Belongs to the IMPDH/GMPR family. GuaC type 2 subfamily.</text>
</comment>
<accession>B8ZJR9</accession>
<name>GUAC_STRPJ</name>
<gene>
    <name evidence="1" type="primary">guaC</name>
    <name type="ordered locus">SPN23F11440</name>
</gene>
<reference key="1">
    <citation type="journal article" date="2009" name="J. Bacteriol.">
        <title>Role of conjugative elements in the evolution of the multidrug-resistant pandemic clone Streptococcus pneumoniae Spain23F ST81.</title>
        <authorList>
            <person name="Croucher N.J."/>
            <person name="Walker D."/>
            <person name="Romero P."/>
            <person name="Lennard N."/>
            <person name="Paterson G.K."/>
            <person name="Bason N.C."/>
            <person name="Mitchell A.M."/>
            <person name="Quail M.A."/>
            <person name="Andrew P.W."/>
            <person name="Parkhill J."/>
            <person name="Bentley S.D."/>
            <person name="Mitchell T.J."/>
        </authorList>
    </citation>
    <scope>NUCLEOTIDE SEQUENCE [LARGE SCALE GENOMIC DNA]</scope>
    <source>
        <strain>ATCC 700669 / Spain 23F-1</strain>
    </source>
</reference>